<name>DOHH_DROPS</name>
<gene>
    <name evidence="1" type="primary">nero</name>
    <name type="synonym">l(3)s1921</name>
    <name type="ORF">GA15318</name>
</gene>
<sequence>MVSQEQIEAIGGVLNNKDRPLKERFRALFTLKNIGGKTAIDAISKAFDDDSALLKHELAYCLGQMQDPTALEILTKVLKDTTQEPMVRHEAAEAMGAIGHADVLAILEEYKKDPVVEVAETCAIALDRVRWLQSGQQVADNNPYASVDPSPPTAGDKSVAELKAIYLDAKQTLFDRYRAMFSLRNLCTEESVLAIAEGLKDSSALFRHEVAFVLGQLQEPCSIPYLQENLEDHKENEMVRHECAEALGAIATDDCIQILTRYADDEKRVVKESCVIALDMCEYENSPEFQYADGLSKLDGTK</sequence>
<dbReference type="EC" id="1.14.99.29" evidence="1"/>
<dbReference type="EMBL" id="CM000070">
    <property type="protein sequence ID" value="EAL28133.1"/>
    <property type="molecule type" value="Genomic_DNA"/>
</dbReference>
<dbReference type="RefSeq" id="XP_001358990.1">
    <property type="nucleotide sequence ID" value="XM_001358953.3"/>
</dbReference>
<dbReference type="SMR" id="Q297S2"/>
<dbReference type="FunCoup" id="Q297S2">
    <property type="interactions" value="1286"/>
</dbReference>
<dbReference type="STRING" id="46245.Q297S2"/>
<dbReference type="EnsemblMetazoa" id="FBtr0285690">
    <property type="protein sequence ID" value="FBpp0284128"/>
    <property type="gene ID" value="FBgn0075338"/>
</dbReference>
<dbReference type="GeneID" id="4801977"/>
<dbReference type="KEGG" id="dpo:4801977"/>
<dbReference type="CTD" id="43740"/>
<dbReference type="eggNOG" id="KOG0567">
    <property type="taxonomic scope" value="Eukaryota"/>
</dbReference>
<dbReference type="HOGENOM" id="CLU_053974_0_0_1"/>
<dbReference type="InParanoid" id="Q297S2"/>
<dbReference type="OMA" id="LQEPCSI"/>
<dbReference type="PhylomeDB" id="Q297S2"/>
<dbReference type="UniPathway" id="UPA00354"/>
<dbReference type="Proteomes" id="UP000001819">
    <property type="component" value="Chromosome 2"/>
</dbReference>
<dbReference type="Bgee" id="FBgn0075338">
    <property type="expression patterns" value="Expressed in female reproductive system and 3 other cell types or tissues"/>
</dbReference>
<dbReference type="GO" id="GO:0042406">
    <property type="term" value="C:extrinsic component of endoplasmic reticulum membrane"/>
    <property type="evidence" value="ECO:0007669"/>
    <property type="project" value="UniProtKB-UniRule"/>
</dbReference>
<dbReference type="GO" id="GO:0019135">
    <property type="term" value="F:deoxyhypusine monooxygenase activity"/>
    <property type="evidence" value="ECO:0000250"/>
    <property type="project" value="UniProtKB"/>
</dbReference>
<dbReference type="GO" id="GO:0046872">
    <property type="term" value="F:metal ion binding"/>
    <property type="evidence" value="ECO:0007669"/>
    <property type="project" value="UniProtKB-KW"/>
</dbReference>
<dbReference type="GO" id="GO:0008612">
    <property type="term" value="P:peptidyl-lysine modification to peptidyl-hypusine"/>
    <property type="evidence" value="ECO:0000250"/>
    <property type="project" value="UniProtKB"/>
</dbReference>
<dbReference type="FunFam" id="1.25.10.10:FF:000099">
    <property type="entry name" value="Deoxyhypusine hydroxylase"/>
    <property type="match status" value="2"/>
</dbReference>
<dbReference type="Gene3D" id="1.25.10.10">
    <property type="entry name" value="Leucine-rich Repeat Variant"/>
    <property type="match status" value="2"/>
</dbReference>
<dbReference type="HAMAP" id="MF_03101">
    <property type="entry name" value="Deoxyhypusine_hydroxylase"/>
    <property type="match status" value="1"/>
</dbReference>
<dbReference type="InterPro" id="IPR011989">
    <property type="entry name" value="ARM-like"/>
</dbReference>
<dbReference type="InterPro" id="IPR016024">
    <property type="entry name" value="ARM-type_fold"/>
</dbReference>
<dbReference type="InterPro" id="IPR027517">
    <property type="entry name" value="Deoxyhypusine_hydroxylase"/>
</dbReference>
<dbReference type="InterPro" id="IPR004155">
    <property type="entry name" value="PBS_lyase_HEAT"/>
</dbReference>
<dbReference type="PANTHER" id="PTHR12697:SF5">
    <property type="entry name" value="DEOXYHYPUSINE HYDROXYLASE"/>
    <property type="match status" value="1"/>
</dbReference>
<dbReference type="PANTHER" id="PTHR12697">
    <property type="entry name" value="PBS LYASE HEAT-LIKE PROTEIN"/>
    <property type="match status" value="1"/>
</dbReference>
<dbReference type="Pfam" id="PF13646">
    <property type="entry name" value="HEAT_2"/>
    <property type="match status" value="2"/>
</dbReference>
<dbReference type="SMART" id="SM00567">
    <property type="entry name" value="EZ_HEAT"/>
    <property type="match status" value="6"/>
</dbReference>
<dbReference type="SUPFAM" id="SSF48371">
    <property type="entry name" value="ARM repeat"/>
    <property type="match status" value="1"/>
</dbReference>
<organism>
    <name type="scientific">Drosophila pseudoobscura pseudoobscura</name>
    <name type="common">Fruit fly</name>
    <dbReference type="NCBI Taxonomy" id="46245"/>
    <lineage>
        <taxon>Eukaryota</taxon>
        <taxon>Metazoa</taxon>
        <taxon>Ecdysozoa</taxon>
        <taxon>Arthropoda</taxon>
        <taxon>Hexapoda</taxon>
        <taxon>Insecta</taxon>
        <taxon>Pterygota</taxon>
        <taxon>Neoptera</taxon>
        <taxon>Endopterygota</taxon>
        <taxon>Diptera</taxon>
        <taxon>Brachycera</taxon>
        <taxon>Muscomorpha</taxon>
        <taxon>Ephydroidea</taxon>
        <taxon>Drosophilidae</taxon>
        <taxon>Drosophila</taxon>
        <taxon>Sophophora</taxon>
    </lineage>
</organism>
<keyword id="KW-0256">Endoplasmic reticulum</keyword>
<keyword id="KW-0386">Hypusine biosynthesis</keyword>
<keyword id="KW-0408">Iron</keyword>
<keyword id="KW-0472">Membrane</keyword>
<keyword id="KW-0479">Metal-binding</keyword>
<keyword id="KW-0503">Monooxygenase</keyword>
<keyword id="KW-0560">Oxidoreductase</keyword>
<keyword id="KW-1185">Reference proteome</keyword>
<keyword id="KW-0677">Repeat</keyword>
<comment type="function">
    <text evidence="1">Catalyzes the hydroxylation of the N(6)-(4-aminobutyl)-L-lysine intermediate to form hypusine, an essential post-translational modification only found in mature eIF-5A factor. Essential for organismal viability and plays a role in a wide number of important processes such as cell growth and proliferation, and regulates induction of autophagy and protein synthesis. Has a role in eIF-5A-mediated translational control.</text>
</comment>
<comment type="catalytic activity">
    <reaction evidence="1">
        <text>[eIF5A protein]-deoxyhypusine + AH2 + O2 = [eIF5A protein]-hypusine + A + H2O</text>
        <dbReference type="Rhea" id="RHEA:14101"/>
        <dbReference type="Rhea" id="RHEA-COMP:10144"/>
        <dbReference type="Rhea" id="RHEA-COMP:12592"/>
        <dbReference type="ChEBI" id="CHEBI:13193"/>
        <dbReference type="ChEBI" id="CHEBI:15377"/>
        <dbReference type="ChEBI" id="CHEBI:15379"/>
        <dbReference type="ChEBI" id="CHEBI:17499"/>
        <dbReference type="ChEBI" id="CHEBI:82657"/>
        <dbReference type="ChEBI" id="CHEBI:91175"/>
        <dbReference type="EC" id="1.14.99.29"/>
    </reaction>
</comment>
<comment type="cofactor">
    <cofactor evidence="1">
        <name>Fe(2+)</name>
        <dbReference type="ChEBI" id="CHEBI:29033"/>
    </cofactor>
    <text evidence="1">Binds 2 Fe(2+) ions per subunit.</text>
</comment>
<comment type="pathway">
    <text evidence="1">Protein modification; eIF5A hypusination.</text>
</comment>
<comment type="subcellular location">
    <subcellularLocation>
        <location evidence="1">Endoplasmic reticulum membrane</location>
        <topology evidence="1">Peripheral membrane protein</topology>
        <orientation evidence="1">Cytoplasmic side</orientation>
    </subcellularLocation>
    <text evidence="1">In larval imaginal disk and Garland cells.</text>
</comment>
<comment type="similarity">
    <text evidence="1">Belongs to the deoxyhypusine hydroxylase family.</text>
</comment>
<protein>
    <recommendedName>
        <fullName evidence="1">Deoxyhypusine hydroxylase</fullName>
        <shortName evidence="1">DOHH</shortName>
        <ecNumber evidence="1">1.14.99.29</ecNumber>
    </recommendedName>
    <alternativeName>
        <fullName evidence="1">Deoxyhypusine dioxygenase</fullName>
    </alternativeName>
    <alternativeName>
        <fullName evidence="1">Deoxyhypusine monooxygenase</fullName>
    </alternativeName>
</protein>
<proteinExistence type="inferred from homology"/>
<accession>Q297S2</accession>
<feature type="chain" id="PRO_0000248583" description="Deoxyhypusine hydroxylase">
    <location>
        <begin position="1"/>
        <end position="302"/>
    </location>
</feature>
<feature type="repeat" description="HEAT-like PBS-type 1">
    <location>
        <begin position="23"/>
        <end position="49"/>
    </location>
</feature>
<feature type="repeat" description="HEAT-like PBS-type 2">
    <location>
        <begin position="54"/>
        <end position="80"/>
    </location>
</feature>
<feature type="repeat" description="HEAT-like PBS-type 3">
    <location>
        <begin position="87"/>
        <end position="113"/>
    </location>
</feature>
<feature type="repeat" description="HEAT-like PBS-type 4">
    <location>
        <begin position="175"/>
        <end position="201"/>
    </location>
</feature>
<feature type="repeat" description="HEAT-like PBS-type 5">
    <location>
        <begin position="206"/>
        <end position="232"/>
    </location>
</feature>
<feature type="repeat" description="HEAT-like PBS-type 6">
    <location>
        <begin position="239"/>
        <end position="265"/>
    </location>
</feature>
<feature type="binding site" evidence="1">
    <location>
        <position position="56"/>
    </location>
    <ligand>
        <name>Fe cation</name>
        <dbReference type="ChEBI" id="CHEBI:24875"/>
        <label>1</label>
    </ligand>
</feature>
<feature type="binding site" evidence="1">
    <location>
        <position position="57"/>
    </location>
    <ligand>
        <name>Fe cation</name>
        <dbReference type="ChEBI" id="CHEBI:24875"/>
        <label>1</label>
    </ligand>
</feature>
<feature type="binding site" evidence="1">
    <location>
        <position position="89"/>
    </location>
    <ligand>
        <name>Fe cation</name>
        <dbReference type="ChEBI" id="CHEBI:24875"/>
        <label>1</label>
    </ligand>
</feature>
<feature type="binding site" evidence="1">
    <location>
        <position position="90"/>
    </location>
    <ligand>
        <name>Fe cation</name>
        <dbReference type="ChEBI" id="CHEBI:24875"/>
        <label>1</label>
    </ligand>
</feature>
<feature type="binding site" evidence="1">
    <location>
        <position position="208"/>
    </location>
    <ligand>
        <name>Fe cation</name>
        <dbReference type="ChEBI" id="CHEBI:24875"/>
        <label>2</label>
    </ligand>
</feature>
<feature type="binding site" evidence="1">
    <location>
        <position position="209"/>
    </location>
    <ligand>
        <name>Fe cation</name>
        <dbReference type="ChEBI" id="CHEBI:24875"/>
        <label>2</label>
    </ligand>
</feature>
<feature type="binding site" evidence="1">
    <location>
        <position position="241"/>
    </location>
    <ligand>
        <name>Fe cation</name>
        <dbReference type="ChEBI" id="CHEBI:24875"/>
        <label>2</label>
    </ligand>
</feature>
<feature type="binding site" evidence="1">
    <location>
        <position position="242"/>
    </location>
    <ligand>
        <name>Fe cation</name>
        <dbReference type="ChEBI" id="CHEBI:24875"/>
        <label>2</label>
    </ligand>
</feature>
<reference key="1">
    <citation type="journal article" date="2005" name="Genome Res.">
        <title>Comparative genome sequencing of Drosophila pseudoobscura: chromosomal, gene, and cis-element evolution.</title>
        <authorList>
            <person name="Richards S."/>
            <person name="Liu Y."/>
            <person name="Bettencourt B.R."/>
            <person name="Hradecky P."/>
            <person name="Letovsky S."/>
            <person name="Nielsen R."/>
            <person name="Thornton K."/>
            <person name="Hubisz M.J."/>
            <person name="Chen R."/>
            <person name="Meisel R.P."/>
            <person name="Couronne O."/>
            <person name="Hua S."/>
            <person name="Smith M.A."/>
            <person name="Zhang P."/>
            <person name="Liu J."/>
            <person name="Bussemaker H.J."/>
            <person name="van Batenburg M.F."/>
            <person name="Howells S.L."/>
            <person name="Scherer S.E."/>
            <person name="Sodergren E."/>
            <person name="Matthews B.B."/>
            <person name="Crosby M.A."/>
            <person name="Schroeder A.J."/>
            <person name="Ortiz-Barrientos D."/>
            <person name="Rives C.M."/>
            <person name="Metzker M.L."/>
            <person name="Muzny D.M."/>
            <person name="Scott G."/>
            <person name="Steffen D."/>
            <person name="Wheeler D.A."/>
            <person name="Worley K.C."/>
            <person name="Havlak P."/>
            <person name="Durbin K.J."/>
            <person name="Egan A."/>
            <person name="Gill R."/>
            <person name="Hume J."/>
            <person name="Morgan M.B."/>
            <person name="Miner G."/>
            <person name="Hamilton C."/>
            <person name="Huang Y."/>
            <person name="Waldron L."/>
            <person name="Verduzco D."/>
            <person name="Clerc-Blankenburg K.P."/>
            <person name="Dubchak I."/>
            <person name="Noor M.A.F."/>
            <person name="Anderson W."/>
            <person name="White K.P."/>
            <person name="Clark A.G."/>
            <person name="Schaeffer S.W."/>
            <person name="Gelbart W.M."/>
            <person name="Weinstock G.M."/>
            <person name="Gibbs R.A."/>
        </authorList>
    </citation>
    <scope>NUCLEOTIDE SEQUENCE [LARGE SCALE GENOMIC DNA]</scope>
    <source>
        <strain>MV2-25 / Tucson 14011-0121.94</strain>
    </source>
</reference>
<evidence type="ECO:0000255" key="1">
    <source>
        <dbReference type="HAMAP-Rule" id="MF_03101"/>
    </source>
</evidence>